<gene>
    <name evidence="1" type="primary">htpG</name>
    <name type="ordered locus">RT0828</name>
</gene>
<proteinExistence type="inferred from homology"/>
<dbReference type="EMBL" id="AE017197">
    <property type="protein sequence ID" value="AAU04282.1"/>
    <property type="molecule type" value="Genomic_DNA"/>
</dbReference>
<dbReference type="RefSeq" id="WP_011191256.1">
    <property type="nucleotide sequence ID" value="NC_006142.1"/>
</dbReference>
<dbReference type="SMR" id="Q68Y08"/>
<dbReference type="KEGG" id="rty:RT0828"/>
<dbReference type="eggNOG" id="COG0326">
    <property type="taxonomic scope" value="Bacteria"/>
</dbReference>
<dbReference type="HOGENOM" id="CLU_006684_3_0_5"/>
<dbReference type="OrthoDB" id="9802640at2"/>
<dbReference type="Proteomes" id="UP000000604">
    <property type="component" value="Chromosome"/>
</dbReference>
<dbReference type="GO" id="GO:0005737">
    <property type="term" value="C:cytoplasm"/>
    <property type="evidence" value="ECO:0007669"/>
    <property type="project" value="UniProtKB-SubCell"/>
</dbReference>
<dbReference type="GO" id="GO:0005524">
    <property type="term" value="F:ATP binding"/>
    <property type="evidence" value="ECO:0007669"/>
    <property type="project" value="UniProtKB-UniRule"/>
</dbReference>
<dbReference type="GO" id="GO:0016887">
    <property type="term" value="F:ATP hydrolysis activity"/>
    <property type="evidence" value="ECO:0007669"/>
    <property type="project" value="InterPro"/>
</dbReference>
<dbReference type="GO" id="GO:0140662">
    <property type="term" value="F:ATP-dependent protein folding chaperone"/>
    <property type="evidence" value="ECO:0007669"/>
    <property type="project" value="InterPro"/>
</dbReference>
<dbReference type="GO" id="GO:0051082">
    <property type="term" value="F:unfolded protein binding"/>
    <property type="evidence" value="ECO:0007669"/>
    <property type="project" value="UniProtKB-UniRule"/>
</dbReference>
<dbReference type="CDD" id="cd16927">
    <property type="entry name" value="HATPase_Hsp90-like"/>
    <property type="match status" value="1"/>
</dbReference>
<dbReference type="FunFam" id="3.30.565.10:FF:000009">
    <property type="entry name" value="Molecular chaperone HtpG"/>
    <property type="match status" value="1"/>
</dbReference>
<dbReference type="Gene3D" id="3.30.230.80">
    <property type="match status" value="1"/>
</dbReference>
<dbReference type="Gene3D" id="3.40.50.11260">
    <property type="match status" value="1"/>
</dbReference>
<dbReference type="Gene3D" id="1.20.120.790">
    <property type="entry name" value="Heat shock protein 90, C-terminal domain"/>
    <property type="match status" value="1"/>
</dbReference>
<dbReference type="Gene3D" id="3.30.565.10">
    <property type="entry name" value="Histidine kinase-like ATPase, C-terminal domain"/>
    <property type="match status" value="1"/>
</dbReference>
<dbReference type="HAMAP" id="MF_00505">
    <property type="entry name" value="HSP90"/>
    <property type="match status" value="1"/>
</dbReference>
<dbReference type="InterPro" id="IPR036890">
    <property type="entry name" value="HATPase_C_sf"/>
</dbReference>
<dbReference type="InterPro" id="IPR019805">
    <property type="entry name" value="Heat_shock_protein_90_CS"/>
</dbReference>
<dbReference type="InterPro" id="IPR037196">
    <property type="entry name" value="HSP90_C"/>
</dbReference>
<dbReference type="InterPro" id="IPR001404">
    <property type="entry name" value="Hsp90_fam"/>
</dbReference>
<dbReference type="InterPro" id="IPR020575">
    <property type="entry name" value="Hsp90_N"/>
</dbReference>
<dbReference type="InterPro" id="IPR020568">
    <property type="entry name" value="Ribosomal_Su5_D2-typ_SF"/>
</dbReference>
<dbReference type="NCBIfam" id="NF003555">
    <property type="entry name" value="PRK05218.1"/>
    <property type="match status" value="1"/>
</dbReference>
<dbReference type="PANTHER" id="PTHR11528">
    <property type="entry name" value="HEAT SHOCK PROTEIN 90 FAMILY MEMBER"/>
    <property type="match status" value="1"/>
</dbReference>
<dbReference type="Pfam" id="PF13589">
    <property type="entry name" value="HATPase_c_3"/>
    <property type="match status" value="1"/>
</dbReference>
<dbReference type="Pfam" id="PF00183">
    <property type="entry name" value="HSP90"/>
    <property type="match status" value="1"/>
</dbReference>
<dbReference type="PIRSF" id="PIRSF002583">
    <property type="entry name" value="Hsp90"/>
    <property type="match status" value="1"/>
</dbReference>
<dbReference type="PRINTS" id="PR00775">
    <property type="entry name" value="HEATSHOCK90"/>
</dbReference>
<dbReference type="SMART" id="SM00387">
    <property type="entry name" value="HATPase_c"/>
    <property type="match status" value="1"/>
</dbReference>
<dbReference type="SUPFAM" id="SSF55874">
    <property type="entry name" value="ATPase domain of HSP90 chaperone/DNA topoisomerase II/histidine kinase"/>
    <property type="match status" value="1"/>
</dbReference>
<dbReference type="SUPFAM" id="SSF110942">
    <property type="entry name" value="HSP90 C-terminal domain"/>
    <property type="match status" value="1"/>
</dbReference>
<dbReference type="SUPFAM" id="SSF54211">
    <property type="entry name" value="Ribosomal protein S5 domain 2-like"/>
    <property type="match status" value="1"/>
</dbReference>
<dbReference type="PROSITE" id="PS00298">
    <property type="entry name" value="HSP90"/>
    <property type="match status" value="1"/>
</dbReference>
<comment type="function">
    <text evidence="1">Molecular chaperone. Has ATPase activity.</text>
</comment>
<comment type="subunit">
    <text evidence="1">Homodimer.</text>
</comment>
<comment type="subcellular location">
    <subcellularLocation>
        <location evidence="1">Cytoplasm</location>
    </subcellularLocation>
</comment>
<comment type="similarity">
    <text evidence="1">Belongs to the heat shock protein 90 family.</text>
</comment>
<accession>Q68Y08</accession>
<keyword id="KW-0067">ATP-binding</keyword>
<keyword id="KW-0143">Chaperone</keyword>
<keyword id="KW-0963">Cytoplasm</keyword>
<keyword id="KW-0547">Nucleotide-binding</keyword>
<keyword id="KW-0346">Stress response</keyword>
<feature type="chain" id="PRO_0000224228" description="Chaperone protein HtpG">
    <location>
        <begin position="1"/>
        <end position="621"/>
    </location>
</feature>
<feature type="region of interest" description="A; substrate-binding" evidence="1">
    <location>
        <begin position="1"/>
        <end position="328"/>
    </location>
</feature>
<feature type="region of interest" description="B" evidence="1">
    <location>
        <begin position="329"/>
        <end position="544"/>
    </location>
</feature>
<feature type="region of interest" description="C" evidence="1">
    <location>
        <begin position="545"/>
        <end position="621"/>
    </location>
</feature>
<name>HTPG_RICTY</name>
<sequence length="621" mass="70937">MTQEKKKFDAEVGKILNLMIHSLYSNKEIFMRELISNASDACDKLRYLSQSNSELISGDSNFKIIVKVDKDNEQIIIRDNGIGMNKEDLIENLGTIARSGTANFLKNLSGDSKKDNMLIGQFGVGFYSSFMVADKVTVTSRKAGENKVYTWESDGLGEYIVADSEQEFARGTEIVLYIKKAETTFLDHFRLKHIVKSYSDHIAVPIYFCDEASNNEIQLNSASALWTRPKSEITEEQYKEFYKSLSYSVDDPWVTLHNKNEGAIEFTNLLFIPSSKTFDLFHPDRKRRVKLYIKRVFISDENIDLIPSYLRFLRGVVDSEDLPLNISRESLQHNNVLEKIKNAITKRVLGELRKKKEELPEEYNKFWTNFGGALKEGLCEATTDHEKLLEVCIFRSALHNKMISIDEYIANFKEGQNTIYYLSGDNPDKLLSSPQIEGLLNKNIDVLLFTDTVDDFWVNVNSEYKGYAIKSATRSDIDVEHTTSRPQDKNTDSKKSDDEYKLLTDYFKEILGELVKEVKISKKLTLSPACLAVSDTAMDIRMERFLIEQKQIASASAKNLELNPKNKIIEKIFNDLKANNKNNEELVNLIFDQACILEGEPIADTGAFSKRLNDILQKAIL</sequence>
<organism>
    <name type="scientific">Rickettsia typhi (strain ATCC VR-144 / Wilmington)</name>
    <dbReference type="NCBI Taxonomy" id="257363"/>
    <lineage>
        <taxon>Bacteria</taxon>
        <taxon>Pseudomonadati</taxon>
        <taxon>Pseudomonadota</taxon>
        <taxon>Alphaproteobacteria</taxon>
        <taxon>Rickettsiales</taxon>
        <taxon>Rickettsiaceae</taxon>
        <taxon>Rickettsieae</taxon>
        <taxon>Rickettsia</taxon>
        <taxon>typhus group</taxon>
    </lineage>
</organism>
<evidence type="ECO:0000255" key="1">
    <source>
        <dbReference type="HAMAP-Rule" id="MF_00505"/>
    </source>
</evidence>
<protein>
    <recommendedName>
        <fullName evidence="1">Chaperone protein HtpG</fullName>
    </recommendedName>
    <alternativeName>
        <fullName evidence="1">Heat shock protein HtpG</fullName>
    </alternativeName>
    <alternativeName>
        <fullName evidence="1">High temperature protein G</fullName>
    </alternativeName>
</protein>
<reference key="1">
    <citation type="journal article" date="2004" name="J. Bacteriol.">
        <title>Complete genome sequence of Rickettsia typhi and comparison with sequences of other Rickettsiae.</title>
        <authorList>
            <person name="McLeod M.P."/>
            <person name="Qin X."/>
            <person name="Karpathy S.E."/>
            <person name="Gioia J."/>
            <person name="Highlander S.K."/>
            <person name="Fox G.E."/>
            <person name="McNeill T.Z."/>
            <person name="Jiang H."/>
            <person name="Muzny D."/>
            <person name="Jacob L.S."/>
            <person name="Hawes A.C."/>
            <person name="Sodergren E."/>
            <person name="Gill R."/>
            <person name="Hume J."/>
            <person name="Morgan M."/>
            <person name="Fan G."/>
            <person name="Amin A.G."/>
            <person name="Gibbs R.A."/>
            <person name="Hong C."/>
            <person name="Yu X.-J."/>
            <person name="Walker D.H."/>
            <person name="Weinstock G.M."/>
        </authorList>
    </citation>
    <scope>NUCLEOTIDE SEQUENCE [LARGE SCALE GENOMIC DNA]</scope>
    <source>
        <strain>ATCC VR-144 / Wilmington</strain>
    </source>
</reference>